<protein>
    <recommendedName>
        <fullName evidence="1">Adenosine 5'-phosphosulfate reductase</fullName>
        <shortName evidence="1">APS reductase</shortName>
        <ecNumber evidence="1">1.8.4.10</ecNumber>
    </recommendedName>
    <alternativeName>
        <fullName evidence="1">5'-adenylylsulfate reductase</fullName>
    </alternativeName>
    <alternativeName>
        <fullName evidence="1">Thioredoxin-dependent 5'-adenylylsulfate reductase</fullName>
    </alternativeName>
</protein>
<comment type="function">
    <text evidence="1">Catalyzes the formation of sulfite from adenosine 5'-phosphosulfate (APS) using thioredoxin as an electron donor.</text>
</comment>
<comment type="catalytic activity">
    <reaction evidence="1">
        <text>[thioredoxin]-disulfide + sulfite + AMP + 2 H(+) = adenosine 5'-phosphosulfate + [thioredoxin]-dithiol</text>
        <dbReference type="Rhea" id="RHEA:21976"/>
        <dbReference type="Rhea" id="RHEA-COMP:10698"/>
        <dbReference type="Rhea" id="RHEA-COMP:10700"/>
        <dbReference type="ChEBI" id="CHEBI:15378"/>
        <dbReference type="ChEBI" id="CHEBI:17359"/>
        <dbReference type="ChEBI" id="CHEBI:29950"/>
        <dbReference type="ChEBI" id="CHEBI:50058"/>
        <dbReference type="ChEBI" id="CHEBI:58243"/>
        <dbReference type="ChEBI" id="CHEBI:456215"/>
        <dbReference type="EC" id="1.8.4.10"/>
    </reaction>
</comment>
<comment type="cofactor">
    <cofactor evidence="1">
        <name>[4Fe-4S] cluster</name>
        <dbReference type="ChEBI" id="CHEBI:49883"/>
    </cofactor>
    <text evidence="1">Binds 1 [4Fe-4S] cluster per subunit.</text>
</comment>
<comment type="pathway">
    <text evidence="1">Sulfur metabolism; hydrogen sulfide biosynthesis; sulfite from sulfate.</text>
</comment>
<comment type="subcellular location">
    <subcellularLocation>
        <location evidence="1">Cytoplasm</location>
    </subcellularLocation>
</comment>
<comment type="similarity">
    <text evidence="1">Belongs to the PAPS reductase family. CysH subfamily.</text>
</comment>
<name>CYSH_BACC4</name>
<sequence>MLTYETWEENVVSFSEEDETKGALSVLNWAYKEYKDEVVYACSFGVEGMVLLHIINQVNPSAKVVFLDTNVHFQETYELIQKVRERFPSLNIIEKQPELTLDEQAKLHGEKLWESNPNLCCKIRKILPLEKSLVVEKAWISGLRREQSETRKHTKFINQDHRFQSIKVCPLIHWTWKEVWRYVYKHSLPYNPLHDVGYPSIGCEKCTLPVGDGGDSRDGRWAGKVKTECGLHYQ</sequence>
<accession>B7HHH6</accession>
<keyword id="KW-0963">Cytoplasm</keyword>
<keyword id="KW-0408">Iron</keyword>
<keyword id="KW-0411">Iron-sulfur</keyword>
<keyword id="KW-0479">Metal-binding</keyword>
<keyword id="KW-0560">Oxidoreductase</keyword>
<evidence type="ECO:0000255" key="1">
    <source>
        <dbReference type="HAMAP-Rule" id="MF_00063"/>
    </source>
</evidence>
<organism>
    <name type="scientific">Bacillus cereus (strain B4264)</name>
    <dbReference type="NCBI Taxonomy" id="405532"/>
    <lineage>
        <taxon>Bacteria</taxon>
        <taxon>Bacillati</taxon>
        <taxon>Bacillota</taxon>
        <taxon>Bacilli</taxon>
        <taxon>Bacillales</taxon>
        <taxon>Bacillaceae</taxon>
        <taxon>Bacillus</taxon>
        <taxon>Bacillus cereus group</taxon>
    </lineage>
</organism>
<reference key="1">
    <citation type="submission" date="2008-10" db="EMBL/GenBank/DDBJ databases">
        <title>Genome sequence of Bacillus cereus B4264.</title>
        <authorList>
            <person name="Dodson R.J."/>
            <person name="Durkin A.S."/>
            <person name="Rosovitz M.J."/>
            <person name="Rasko D.A."/>
            <person name="Hoffmaster A."/>
            <person name="Ravel J."/>
            <person name="Sutton G."/>
        </authorList>
    </citation>
    <scope>NUCLEOTIDE SEQUENCE [LARGE SCALE GENOMIC DNA]</scope>
    <source>
        <strain>B4264</strain>
    </source>
</reference>
<gene>
    <name evidence="1" type="primary">cysH</name>
    <name type="ordered locus">BCB4264_A1476</name>
</gene>
<feature type="chain" id="PRO_1000116946" description="Adenosine 5'-phosphosulfate reductase">
    <location>
        <begin position="1"/>
        <end position="234"/>
    </location>
</feature>
<feature type="active site" description="Nucleophile; cysteine thiosulfonate intermediate" evidence="1">
    <location>
        <position position="229"/>
    </location>
</feature>
<feature type="binding site" evidence="1">
    <location>
        <position position="120"/>
    </location>
    <ligand>
        <name>[4Fe-4S] cluster</name>
        <dbReference type="ChEBI" id="CHEBI:49883"/>
    </ligand>
</feature>
<feature type="binding site" evidence="1">
    <location>
        <position position="121"/>
    </location>
    <ligand>
        <name>[4Fe-4S] cluster</name>
        <dbReference type="ChEBI" id="CHEBI:49883"/>
    </ligand>
</feature>
<feature type="binding site" evidence="1">
    <location>
        <position position="203"/>
    </location>
    <ligand>
        <name>[4Fe-4S] cluster</name>
        <dbReference type="ChEBI" id="CHEBI:49883"/>
    </ligand>
</feature>
<feature type="binding site" evidence="1">
    <location>
        <position position="206"/>
    </location>
    <ligand>
        <name>[4Fe-4S] cluster</name>
        <dbReference type="ChEBI" id="CHEBI:49883"/>
    </ligand>
</feature>
<proteinExistence type="inferred from homology"/>
<dbReference type="EC" id="1.8.4.10" evidence="1"/>
<dbReference type="EMBL" id="CP001176">
    <property type="protein sequence ID" value="ACK62751.1"/>
    <property type="molecule type" value="Genomic_DNA"/>
</dbReference>
<dbReference type="RefSeq" id="WP_000959020.1">
    <property type="nucleotide sequence ID" value="NC_011725.1"/>
</dbReference>
<dbReference type="SMR" id="B7HHH6"/>
<dbReference type="KEGG" id="bcb:BCB4264_A1476"/>
<dbReference type="HOGENOM" id="CLU_044089_2_1_9"/>
<dbReference type="Proteomes" id="UP000007096">
    <property type="component" value="Chromosome"/>
</dbReference>
<dbReference type="GO" id="GO:0005737">
    <property type="term" value="C:cytoplasm"/>
    <property type="evidence" value="ECO:0007669"/>
    <property type="project" value="UniProtKB-SubCell"/>
</dbReference>
<dbReference type="GO" id="GO:0051539">
    <property type="term" value="F:4 iron, 4 sulfur cluster binding"/>
    <property type="evidence" value="ECO:0007669"/>
    <property type="project" value="UniProtKB-UniRule"/>
</dbReference>
<dbReference type="GO" id="GO:0043866">
    <property type="term" value="F:adenylyl-sulfate reductase (thioredoxin) activity"/>
    <property type="evidence" value="ECO:0007669"/>
    <property type="project" value="UniProtKB-EC"/>
</dbReference>
<dbReference type="GO" id="GO:0046872">
    <property type="term" value="F:metal ion binding"/>
    <property type="evidence" value="ECO:0007669"/>
    <property type="project" value="UniProtKB-KW"/>
</dbReference>
<dbReference type="GO" id="GO:0004604">
    <property type="term" value="F:phosphoadenylyl-sulfate reductase (thioredoxin) activity"/>
    <property type="evidence" value="ECO:0007669"/>
    <property type="project" value="UniProtKB-UniRule"/>
</dbReference>
<dbReference type="GO" id="GO:0019344">
    <property type="term" value="P:cysteine biosynthetic process"/>
    <property type="evidence" value="ECO:0007669"/>
    <property type="project" value="InterPro"/>
</dbReference>
<dbReference type="GO" id="GO:0070814">
    <property type="term" value="P:hydrogen sulfide biosynthetic process"/>
    <property type="evidence" value="ECO:0007669"/>
    <property type="project" value="UniProtKB-UniRule"/>
</dbReference>
<dbReference type="GO" id="GO:0019379">
    <property type="term" value="P:sulfate assimilation, phosphoadenylyl sulfate reduction by phosphoadenylyl-sulfate reductase (thioredoxin)"/>
    <property type="evidence" value="ECO:0007669"/>
    <property type="project" value="UniProtKB-UniRule"/>
</dbReference>
<dbReference type="CDD" id="cd23945">
    <property type="entry name" value="PAPS_reductase"/>
    <property type="match status" value="1"/>
</dbReference>
<dbReference type="FunFam" id="3.40.50.620:FF:000095">
    <property type="entry name" value="Phosphoadenosine phosphosulfate reductase"/>
    <property type="match status" value="1"/>
</dbReference>
<dbReference type="Gene3D" id="3.40.50.620">
    <property type="entry name" value="HUPs"/>
    <property type="match status" value="1"/>
</dbReference>
<dbReference type="HAMAP" id="MF_00063">
    <property type="entry name" value="CysH"/>
    <property type="match status" value="1"/>
</dbReference>
<dbReference type="InterPro" id="IPR011798">
    <property type="entry name" value="APS_reductase"/>
</dbReference>
<dbReference type="InterPro" id="IPR004511">
    <property type="entry name" value="PAPS/APS_Rdtase"/>
</dbReference>
<dbReference type="InterPro" id="IPR002500">
    <property type="entry name" value="PAPS_reduct_dom"/>
</dbReference>
<dbReference type="InterPro" id="IPR014729">
    <property type="entry name" value="Rossmann-like_a/b/a_fold"/>
</dbReference>
<dbReference type="NCBIfam" id="TIGR02055">
    <property type="entry name" value="APS_reductase"/>
    <property type="match status" value="1"/>
</dbReference>
<dbReference type="NCBIfam" id="TIGR00434">
    <property type="entry name" value="cysH"/>
    <property type="match status" value="1"/>
</dbReference>
<dbReference type="NCBIfam" id="NF002537">
    <property type="entry name" value="PRK02090.1"/>
    <property type="match status" value="1"/>
</dbReference>
<dbReference type="PANTHER" id="PTHR46509">
    <property type="entry name" value="PHOSPHOADENOSINE PHOSPHOSULFATE REDUCTASE"/>
    <property type="match status" value="1"/>
</dbReference>
<dbReference type="PANTHER" id="PTHR46509:SF1">
    <property type="entry name" value="PHOSPHOADENOSINE PHOSPHOSULFATE REDUCTASE"/>
    <property type="match status" value="1"/>
</dbReference>
<dbReference type="Pfam" id="PF01507">
    <property type="entry name" value="PAPS_reduct"/>
    <property type="match status" value="1"/>
</dbReference>
<dbReference type="PIRSF" id="PIRSF000857">
    <property type="entry name" value="PAPS_reductase"/>
    <property type="match status" value="1"/>
</dbReference>
<dbReference type="SUPFAM" id="SSF52402">
    <property type="entry name" value="Adenine nucleotide alpha hydrolases-like"/>
    <property type="match status" value="1"/>
</dbReference>